<accession>A9WC26</accession>
<keyword id="KW-0028">Amino-acid biosynthesis</keyword>
<keyword id="KW-0100">Branched-chain amino acid biosynthesis</keyword>
<keyword id="KW-0460">Magnesium</keyword>
<keyword id="KW-0479">Metal-binding</keyword>
<keyword id="KW-0521">NADP</keyword>
<keyword id="KW-0560">Oxidoreductase</keyword>
<keyword id="KW-1185">Reference proteome</keyword>
<organism>
    <name type="scientific">Chloroflexus aurantiacus (strain ATCC 29366 / DSM 635 / J-10-fl)</name>
    <dbReference type="NCBI Taxonomy" id="324602"/>
    <lineage>
        <taxon>Bacteria</taxon>
        <taxon>Bacillati</taxon>
        <taxon>Chloroflexota</taxon>
        <taxon>Chloroflexia</taxon>
        <taxon>Chloroflexales</taxon>
        <taxon>Chloroflexineae</taxon>
        <taxon>Chloroflexaceae</taxon>
        <taxon>Chloroflexus</taxon>
    </lineage>
</organism>
<evidence type="ECO:0000255" key="1">
    <source>
        <dbReference type="HAMAP-Rule" id="MF_00435"/>
    </source>
</evidence>
<evidence type="ECO:0000255" key="2">
    <source>
        <dbReference type="PROSITE-ProRule" id="PRU01197"/>
    </source>
</evidence>
<evidence type="ECO:0000255" key="3">
    <source>
        <dbReference type="PROSITE-ProRule" id="PRU01198"/>
    </source>
</evidence>
<name>ILVC_CHLAA</name>
<reference key="1">
    <citation type="journal article" date="2011" name="BMC Genomics">
        <title>Complete genome sequence of the filamentous anoxygenic phototrophic bacterium Chloroflexus aurantiacus.</title>
        <authorList>
            <person name="Tang K.H."/>
            <person name="Barry K."/>
            <person name="Chertkov O."/>
            <person name="Dalin E."/>
            <person name="Han C.S."/>
            <person name="Hauser L.J."/>
            <person name="Honchak B.M."/>
            <person name="Karbach L.E."/>
            <person name="Land M.L."/>
            <person name="Lapidus A."/>
            <person name="Larimer F.W."/>
            <person name="Mikhailova N."/>
            <person name="Pitluck S."/>
            <person name="Pierson B.K."/>
            <person name="Blankenship R.E."/>
        </authorList>
    </citation>
    <scope>NUCLEOTIDE SEQUENCE [LARGE SCALE GENOMIC DNA]</scope>
    <source>
        <strain>ATCC 29366 / DSM 635 / J-10-fl</strain>
    </source>
</reference>
<dbReference type="EC" id="1.1.1.86" evidence="1"/>
<dbReference type="EMBL" id="CP000909">
    <property type="protein sequence ID" value="ABY33419.1"/>
    <property type="molecule type" value="Genomic_DNA"/>
</dbReference>
<dbReference type="RefSeq" id="WP_012256075.1">
    <property type="nucleotide sequence ID" value="NC_010175.1"/>
</dbReference>
<dbReference type="RefSeq" id="YP_001633808.1">
    <property type="nucleotide sequence ID" value="NC_010175.1"/>
</dbReference>
<dbReference type="SMR" id="A9WC26"/>
<dbReference type="FunCoup" id="A9WC26">
    <property type="interactions" value="445"/>
</dbReference>
<dbReference type="STRING" id="324602.Caur_0165"/>
<dbReference type="EnsemblBacteria" id="ABY33419">
    <property type="protein sequence ID" value="ABY33419"/>
    <property type="gene ID" value="Caur_0165"/>
</dbReference>
<dbReference type="KEGG" id="cau:Caur_0165"/>
<dbReference type="PATRIC" id="fig|324602.8.peg.189"/>
<dbReference type="eggNOG" id="COG0059">
    <property type="taxonomic scope" value="Bacteria"/>
</dbReference>
<dbReference type="HOGENOM" id="CLU_033821_0_1_0"/>
<dbReference type="InParanoid" id="A9WC26"/>
<dbReference type="UniPathway" id="UPA00047">
    <property type="reaction ID" value="UER00056"/>
</dbReference>
<dbReference type="UniPathway" id="UPA00049">
    <property type="reaction ID" value="UER00060"/>
</dbReference>
<dbReference type="Proteomes" id="UP000002008">
    <property type="component" value="Chromosome"/>
</dbReference>
<dbReference type="GO" id="GO:0005829">
    <property type="term" value="C:cytosol"/>
    <property type="evidence" value="ECO:0000318"/>
    <property type="project" value="GO_Central"/>
</dbReference>
<dbReference type="GO" id="GO:0004455">
    <property type="term" value="F:ketol-acid reductoisomerase activity"/>
    <property type="evidence" value="ECO:0000318"/>
    <property type="project" value="GO_Central"/>
</dbReference>
<dbReference type="GO" id="GO:0000287">
    <property type="term" value="F:magnesium ion binding"/>
    <property type="evidence" value="ECO:0007669"/>
    <property type="project" value="UniProtKB-UniRule"/>
</dbReference>
<dbReference type="GO" id="GO:0050661">
    <property type="term" value="F:NADP binding"/>
    <property type="evidence" value="ECO:0007669"/>
    <property type="project" value="InterPro"/>
</dbReference>
<dbReference type="GO" id="GO:0009097">
    <property type="term" value="P:isoleucine biosynthetic process"/>
    <property type="evidence" value="ECO:0000318"/>
    <property type="project" value="GO_Central"/>
</dbReference>
<dbReference type="GO" id="GO:0009099">
    <property type="term" value="P:L-valine biosynthetic process"/>
    <property type="evidence" value="ECO:0000318"/>
    <property type="project" value="GO_Central"/>
</dbReference>
<dbReference type="FunFam" id="3.40.50.720:FF:000023">
    <property type="entry name" value="Ketol-acid reductoisomerase (NADP(+))"/>
    <property type="match status" value="1"/>
</dbReference>
<dbReference type="Gene3D" id="6.10.240.10">
    <property type="match status" value="1"/>
</dbReference>
<dbReference type="Gene3D" id="3.40.50.720">
    <property type="entry name" value="NAD(P)-binding Rossmann-like Domain"/>
    <property type="match status" value="1"/>
</dbReference>
<dbReference type="HAMAP" id="MF_00435">
    <property type="entry name" value="IlvC"/>
    <property type="match status" value="1"/>
</dbReference>
<dbReference type="InterPro" id="IPR008927">
    <property type="entry name" value="6-PGluconate_DH-like_C_sf"/>
</dbReference>
<dbReference type="InterPro" id="IPR013023">
    <property type="entry name" value="KARI"/>
</dbReference>
<dbReference type="InterPro" id="IPR000506">
    <property type="entry name" value="KARI_C"/>
</dbReference>
<dbReference type="InterPro" id="IPR013116">
    <property type="entry name" value="KARI_N"/>
</dbReference>
<dbReference type="InterPro" id="IPR014359">
    <property type="entry name" value="KARI_prok"/>
</dbReference>
<dbReference type="InterPro" id="IPR036291">
    <property type="entry name" value="NAD(P)-bd_dom_sf"/>
</dbReference>
<dbReference type="NCBIfam" id="TIGR00465">
    <property type="entry name" value="ilvC"/>
    <property type="match status" value="1"/>
</dbReference>
<dbReference type="NCBIfam" id="NF004017">
    <property type="entry name" value="PRK05479.1"/>
    <property type="match status" value="1"/>
</dbReference>
<dbReference type="NCBIfam" id="NF009940">
    <property type="entry name" value="PRK13403.1"/>
    <property type="match status" value="1"/>
</dbReference>
<dbReference type="PANTHER" id="PTHR21371">
    <property type="entry name" value="KETOL-ACID REDUCTOISOMERASE, MITOCHONDRIAL"/>
    <property type="match status" value="1"/>
</dbReference>
<dbReference type="PANTHER" id="PTHR21371:SF1">
    <property type="entry name" value="KETOL-ACID REDUCTOISOMERASE, MITOCHONDRIAL"/>
    <property type="match status" value="1"/>
</dbReference>
<dbReference type="Pfam" id="PF01450">
    <property type="entry name" value="KARI_C"/>
    <property type="match status" value="1"/>
</dbReference>
<dbReference type="Pfam" id="PF07991">
    <property type="entry name" value="KARI_N"/>
    <property type="match status" value="1"/>
</dbReference>
<dbReference type="PIRSF" id="PIRSF000116">
    <property type="entry name" value="IlvC_gammaproteo"/>
    <property type="match status" value="1"/>
</dbReference>
<dbReference type="SUPFAM" id="SSF48179">
    <property type="entry name" value="6-phosphogluconate dehydrogenase C-terminal domain-like"/>
    <property type="match status" value="1"/>
</dbReference>
<dbReference type="SUPFAM" id="SSF51735">
    <property type="entry name" value="NAD(P)-binding Rossmann-fold domains"/>
    <property type="match status" value="1"/>
</dbReference>
<dbReference type="PROSITE" id="PS51851">
    <property type="entry name" value="KARI_C"/>
    <property type="match status" value="1"/>
</dbReference>
<dbReference type="PROSITE" id="PS51850">
    <property type="entry name" value="KARI_N"/>
    <property type="match status" value="1"/>
</dbReference>
<sequence>MAELYYDNQADLNRLKNKPIAIIGFGSQGHAHARNLADSGLDVRVGLYPGSKSWAKVEAAGLKVMTVAEAAREAQIVMILTPDIGQADLYREHIAPAMEPGKTLMFAHGFNIRFGQIIPPQGIDVSMVAPKAPGHRVREVFVQGGGVPALIAVEQDATGGAFEDALAYAKGLGCTRAGVLRTTFAEETETDLFGEQVVLCGGVSALVKAAFETLVEAGYQPEVAYFECMHELKLIVDLFYQGGLNYMRYSVSDTAEWGDYTAGPKIITDQTRAAMRQILADIQSGAFAEDWIDENHNGRPRFNAYRQADINHPIEQIGRELRRMMPFVNPREVKPGEGGA</sequence>
<protein>
    <recommendedName>
        <fullName evidence="1">Ketol-acid reductoisomerase (NADP(+))</fullName>
        <shortName evidence="1">KARI</shortName>
        <ecNumber evidence="1">1.1.1.86</ecNumber>
    </recommendedName>
    <alternativeName>
        <fullName evidence="1">Acetohydroxy-acid isomeroreductase</fullName>
        <shortName evidence="1">AHIR</shortName>
    </alternativeName>
    <alternativeName>
        <fullName evidence="1">Alpha-keto-beta-hydroxylacyl reductoisomerase</fullName>
    </alternativeName>
    <alternativeName>
        <fullName evidence="1">Ketol-acid reductoisomerase type 1</fullName>
    </alternativeName>
    <alternativeName>
        <fullName evidence="1">Ketol-acid reductoisomerase type I</fullName>
    </alternativeName>
</protein>
<feature type="chain" id="PRO_1000080622" description="Ketol-acid reductoisomerase (NADP(+))">
    <location>
        <begin position="1"/>
        <end position="340"/>
    </location>
</feature>
<feature type="domain" description="KARI N-terminal Rossmann" evidence="2">
    <location>
        <begin position="2"/>
        <end position="182"/>
    </location>
</feature>
<feature type="domain" description="KARI C-terminal knotted" evidence="3">
    <location>
        <begin position="183"/>
        <end position="328"/>
    </location>
</feature>
<feature type="active site" evidence="1">
    <location>
        <position position="108"/>
    </location>
</feature>
<feature type="binding site" evidence="1">
    <location>
        <begin position="25"/>
        <end position="28"/>
    </location>
    <ligand>
        <name>NADP(+)</name>
        <dbReference type="ChEBI" id="CHEBI:58349"/>
    </ligand>
</feature>
<feature type="binding site" evidence="1">
    <location>
        <position position="51"/>
    </location>
    <ligand>
        <name>NADP(+)</name>
        <dbReference type="ChEBI" id="CHEBI:58349"/>
    </ligand>
</feature>
<feature type="binding site" evidence="1">
    <location>
        <position position="53"/>
    </location>
    <ligand>
        <name>NADP(+)</name>
        <dbReference type="ChEBI" id="CHEBI:58349"/>
    </ligand>
</feature>
<feature type="binding site" evidence="1">
    <location>
        <begin position="83"/>
        <end position="86"/>
    </location>
    <ligand>
        <name>NADP(+)</name>
        <dbReference type="ChEBI" id="CHEBI:58349"/>
    </ligand>
</feature>
<feature type="binding site" evidence="1">
    <location>
        <position position="134"/>
    </location>
    <ligand>
        <name>NADP(+)</name>
        <dbReference type="ChEBI" id="CHEBI:58349"/>
    </ligand>
</feature>
<feature type="binding site" evidence="1">
    <location>
        <position position="191"/>
    </location>
    <ligand>
        <name>Mg(2+)</name>
        <dbReference type="ChEBI" id="CHEBI:18420"/>
        <label>1</label>
    </ligand>
</feature>
<feature type="binding site" evidence="1">
    <location>
        <position position="191"/>
    </location>
    <ligand>
        <name>Mg(2+)</name>
        <dbReference type="ChEBI" id="CHEBI:18420"/>
        <label>2</label>
    </ligand>
</feature>
<feature type="binding site" evidence="1">
    <location>
        <position position="195"/>
    </location>
    <ligand>
        <name>Mg(2+)</name>
        <dbReference type="ChEBI" id="CHEBI:18420"/>
        <label>1</label>
    </ligand>
</feature>
<feature type="binding site" evidence="1">
    <location>
        <position position="227"/>
    </location>
    <ligand>
        <name>Mg(2+)</name>
        <dbReference type="ChEBI" id="CHEBI:18420"/>
        <label>2</label>
    </ligand>
</feature>
<feature type="binding site" evidence="1">
    <location>
        <position position="231"/>
    </location>
    <ligand>
        <name>Mg(2+)</name>
        <dbReference type="ChEBI" id="CHEBI:18420"/>
        <label>2</label>
    </ligand>
</feature>
<feature type="binding site" evidence="1">
    <location>
        <position position="252"/>
    </location>
    <ligand>
        <name>substrate</name>
    </ligand>
</feature>
<comment type="function">
    <text evidence="1">Involved in the biosynthesis of branched-chain amino acids (BCAA). Catalyzes an alkyl-migration followed by a ketol-acid reduction of (S)-2-acetolactate (S2AL) to yield (R)-2,3-dihydroxy-isovalerate. In the isomerase reaction, S2AL is rearranged via a Mg-dependent methyl migration to produce 3-hydroxy-3-methyl-2-ketobutyrate (HMKB). In the reductase reaction, this 2-ketoacid undergoes a metal-dependent reduction by NADPH to yield (R)-2,3-dihydroxy-isovalerate.</text>
</comment>
<comment type="catalytic activity">
    <reaction evidence="1">
        <text>(2R)-2,3-dihydroxy-3-methylbutanoate + NADP(+) = (2S)-2-acetolactate + NADPH + H(+)</text>
        <dbReference type="Rhea" id="RHEA:22068"/>
        <dbReference type="ChEBI" id="CHEBI:15378"/>
        <dbReference type="ChEBI" id="CHEBI:49072"/>
        <dbReference type="ChEBI" id="CHEBI:57783"/>
        <dbReference type="ChEBI" id="CHEBI:58349"/>
        <dbReference type="ChEBI" id="CHEBI:58476"/>
        <dbReference type="EC" id="1.1.1.86"/>
    </reaction>
</comment>
<comment type="catalytic activity">
    <reaction evidence="1">
        <text>(2R,3R)-2,3-dihydroxy-3-methylpentanoate + NADP(+) = (S)-2-ethyl-2-hydroxy-3-oxobutanoate + NADPH + H(+)</text>
        <dbReference type="Rhea" id="RHEA:13493"/>
        <dbReference type="ChEBI" id="CHEBI:15378"/>
        <dbReference type="ChEBI" id="CHEBI:49256"/>
        <dbReference type="ChEBI" id="CHEBI:49258"/>
        <dbReference type="ChEBI" id="CHEBI:57783"/>
        <dbReference type="ChEBI" id="CHEBI:58349"/>
        <dbReference type="EC" id="1.1.1.86"/>
    </reaction>
</comment>
<comment type="cofactor">
    <cofactor evidence="1">
        <name>Mg(2+)</name>
        <dbReference type="ChEBI" id="CHEBI:18420"/>
    </cofactor>
    <text evidence="1">Binds 2 magnesium ions per subunit.</text>
</comment>
<comment type="pathway">
    <text evidence="1">Amino-acid biosynthesis; L-isoleucine biosynthesis; L-isoleucine from 2-oxobutanoate: step 2/4.</text>
</comment>
<comment type="pathway">
    <text evidence="1">Amino-acid biosynthesis; L-valine biosynthesis; L-valine from pyruvate: step 2/4.</text>
</comment>
<comment type="similarity">
    <text evidence="1">Belongs to the ketol-acid reductoisomerase family.</text>
</comment>
<gene>
    <name evidence="1" type="primary">ilvC</name>
    <name type="ordered locus">Caur_0165</name>
</gene>
<proteinExistence type="inferred from homology"/>